<organism>
    <name type="scientific">Homo sapiens</name>
    <name type="common">Human</name>
    <dbReference type="NCBI Taxonomy" id="9606"/>
    <lineage>
        <taxon>Eukaryota</taxon>
        <taxon>Metazoa</taxon>
        <taxon>Chordata</taxon>
        <taxon>Craniata</taxon>
        <taxon>Vertebrata</taxon>
        <taxon>Euteleostomi</taxon>
        <taxon>Mammalia</taxon>
        <taxon>Eutheria</taxon>
        <taxon>Euarchontoglires</taxon>
        <taxon>Primates</taxon>
        <taxon>Haplorrhini</taxon>
        <taxon>Catarrhini</taxon>
        <taxon>Hominidae</taxon>
        <taxon>Homo</taxon>
    </lineage>
</organism>
<protein>
    <recommendedName>
        <fullName>CD276 antigen</fullName>
    </recommendedName>
    <alternativeName>
        <fullName>4Ig-B7-H3</fullName>
    </alternativeName>
    <alternativeName>
        <fullName>B7 homolog 3</fullName>
        <shortName>B7-H3</shortName>
    </alternativeName>
    <alternativeName>
        <fullName>Costimulatory molecule</fullName>
    </alternativeName>
    <cdAntigenName>CD276</cdAntigenName>
</protein>
<sequence>MLRRRGSPGMGVHVGAALGALWFCLTGALEVQVPEDPVVALVGTDATLCCSFSPEPGFSLAQLNLIWQLTDTKQLVHSFAEGQDQGSAYANRTALFPDLLAQGNASLRLQRVRVADEGSFTCFVSIRDFGSAAVSLQVAAPYSKPSMTLEPNKDLRPGDTVTITCSSYQGYPEAEVFWQDGQGVPLTGNVTTSQMANEQGLFDVHSILRVVLGANGTYSCLVRNPVLQQDAHSSVTITPQRSPTGAVEVQVPEDPVVALVGTDATLRCSFSPEPGFSLAQLNLIWQLTDTKQLVHSFTEGRDQGSAYANRTALFPDLLAQGNASLRLQRVRVADEGSFTCFVSIRDFGSAAVSLQVAAPYSKPSMTLEPNKDLRPGDTVTITCSSYRGYPEAEVFWQDGQGVPLTGNVTTSQMANEQGLFDVHSVLRVVLGANGTYSCLVRNPVLQQDAHGSVTITGQPMTFPPEALWVTVGLSVCLIALLVALAFVCWRKIKQSCEEENAGAEDQDGEGEGSKTALQPLKHSDSKEDDGQEIA</sequence>
<accession>Q5ZPR3</accession>
<accession>Q6P5Y4</accession>
<accession>Q6UXI2</accession>
<accession>Q8NBI8</accession>
<accession>Q8NC34</accession>
<accession>Q8NCB6</accession>
<accession>Q9BXR1</accession>
<proteinExistence type="evidence at protein level"/>
<comment type="function">
    <text evidence="4 5 7 8 10 11">May participate in the regulation of T-cell-mediated immune response. May play a protective role in tumor cells by inhibiting natural-killer mediated cell lysis as well as a role of marker for detection of neuroblastoma cells. May be involved in the development of acute and chronic transplant rejection and in the regulation of lymphocytic activity at mucosal surfaces. Could also play a key role in providing the placenta and fetus with a suitable immunological environment throughout pregnancy. Both isoform 1 and isoform 2 appear to be redundant in their ability to modulate CD4 T-cell responses. Isoform 2 is shown to enhance the induction of cytotoxic T-cells and selectively stimulates interferon gamma production in the presence of T-cell receptor signaling.</text>
</comment>
<comment type="subunit">
    <text evidence="15">Interacts with TREML2 and this interaction enhances T-cell activation.</text>
</comment>
<comment type="subcellular location">
    <subcellularLocation>
        <location evidence="21">Membrane</location>
        <topology evidence="21">Single-pass type I membrane protein</topology>
    </subcellularLocation>
</comment>
<comment type="alternative products">
    <event type="alternative splicing"/>
    <isoform>
        <id>Q5ZPR3-1</id>
        <name>1</name>
        <name>4Ig-B7-H3</name>
        <sequence type="displayed"/>
    </isoform>
    <isoform>
        <id>Q5ZPR3-2</id>
        <name>2</name>
        <name>B7-H3</name>
        <sequence type="described" ref="VSP_017088"/>
    </isoform>
    <isoform>
        <id>Q5ZPR3-3</id>
        <name>3</name>
        <sequence type="described" ref="VSP_017089 VSP_017090"/>
    </isoform>
    <isoform>
        <id>Q5ZPR3-4</id>
        <name>4</name>
        <sequence type="described" ref="VSP_017091"/>
    </isoform>
</comment>
<comment type="tissue specificity">
    <text evidence="4 7 11 12 13">Ubiquitous but not detectable in peripheral blood lymphocytes or granulocytes. Weakly expressed in resting monocytes. Expressed in dendritic cells derived from monocytes. Expressed in epithelial cells of sinonasal tissue. Expressed in extravillous trophoblast cells and Hofbauer cells of the first trimester placenta and term placenta.</text>
</comment>
<comment type="induction">
    <text evidence="7 10">By bacterial lipopolysaccharides (LPS) in monocytes and by ionomycin in T and B-lymphocytes. Up-regulated in cells mediating rejection of human transplants.</text>
</comment>
<comment type="miscellaneous">
    <text>B7-H3 locus underwent genomic duplication leading to tandemly repeated immunoglobulin-like V and C domains (VC domains). The dominantly expressed human B7-H3 isoform contains tandemly duplicated VC domains. In contrast, mouse B7-H3 transcript contains only one single VC domain form due to an exon structure corresponding to V domain-(pseudoexon C)-(pseudoexon V)-C domain. This duplication appearing in primates is suggested to be very recent supporting a model of multiple independent emergence of tandem VC repeats within human and monkey species.</text>
</comment>
<comment type="miscellaneous">
    <molecule>Isoform 1</molecule>
    <text>Contains tandemly repeated immunoglobulin-like V and C domains.</text>
</comment>
<comment type="miscellaneous">
    <molecule>Isoform 2</molecule>
    <text evidence="21">Minor transcript. Contains one single set of immunoglobulin-like V and C domains.</text>
</comment>
<comment type="miscellaneous">
    <molecule>Isoform 3</molecule>
    <text evidence="21">Contains tandemly repeated immunoglobulin-like V and C domains.</text>
</comment>
<comment type="miscellaneous">
    <molecule>Isoform 4</molecule>
    <text evidence="21">Contains tandemly repeated immunoglobulin-like V and C domains.</text>
</comment>
<comment type="similarity">
    <text evidence="21">Belongs to the immunoglobulin superfamily. BTN/MOG family.</text>
</comment>
<comment type="sequence caution" evidence="21">
    <conflict type="erroneous initiation">
        <sequence resource="EMBL-CDS" id="BAC11344"/>
    </conflict>
</comment>
<gene>
    <name type="primary">CD276</name>
    <name type="synonym">B7H3</name>
    <name type="ORF">PSEC0249</name>
    <name type="ORF">UNQ309/PRO352</name>
</gene>
<dbReference type="EMBL" id="AF302102">
    <property type="protein sequence ID" value="AAK15438.1"/>
    <property type="molecule type" value="mRNA"/>
</dbReference>
<dbReference type="EMBL" id="AJ583695">
    <property type="protein sequence ID" value="CAE47548.1"/>
    <property type="molecule type" value="mRNA"/>
</dbReference>
<dbReference type="EMBL" id="AY358343">
    <property type="protein sequence ID" value="AAQ88709.1"/>
    <property type="molecule type" value="mRNA"/>
</dbReference>
<dbReference type="EMBL" id="AK074849">
    <property type="protein sequence ID" value="BAC11243.1"/>
    <property type="molecule type" value="mRNA"/>
</dbReference>
<dbReference type="EMBL" id="AK074997">
    <property type="protein sequence ID" value="BAC11344.1"/>
    <property type="status" value="ALT_INIT"/>
    <property type="molecule type" value="mRNA"/>
</dbReference>
<dbReference type="EMBL" id="AK075549">
    <property type="protein sequence ID" value="BAC11692.1"/>
    <property type="molecule type" value="mRNA"/>
</dbReference>
<dbReference type="EMBL" id="BC062581">
    <property type="protein sequence ID" value="AAH62581.1"/>
    <property type="molecule type" value="mRNA"/>
</dbReference>
<dbReference type="CCDS" id="CCDS10251.1">
    <molecule id="Q5ZPR3-2"/>
</dbReference>
<dbReference type="CCDS" id="CCDS32288.1">
    <molecule id="Q5ZPR3-1"/>
</dbReference>
<dbReference type="RefSeq" id="NP_001019907.1">
    <molecule id="Q5ZPR3-1"/>
    <property type="nucleotide sequence ID" value="NM_001024736.2"/>
</dbReference>
<dbReference type="RefSeq" id="NP_001316557.1">
    <molecule id="Q5ZPR3-2"/>
    <property type="nucleotide sequence ID" value="NM_001329628.2"/>
</dbReference>
<dbReference type="RefSeq" id="NP_001316558.1">
    <property type="nucleotide sequence ID" value="NM_001329629.1"/>
</dbReference>
<dbReference type="RefSeq" id="NP_079516.1">
    <molecule id="Q5ZPR3-2"/>
    <property type="nucleotide sequence ID" value="NM_025240.3"/>
</dbReference>
<dbReference type="RefSeq" id="XP_005254757.1">
    <molecule id="Q5ZPR3-1"/>
    <property type="nucleotide sequence ID" value="XM_005254700.5"/>
</dbReference>
<dbReference type="RefSeq" id="XP_011520397.1">
    <molecule id="Q5ZPR3-1"/>
    <property type="nucleotide sequence ID" value="XM_011522095.3"/>
</dbReference>
<dbReference type="RefSeq" id="XP_011520398.1">
    <property type="nucleotide sequence ID" value="XM_011522096.2"/>
</dbReference>
<dbReference type="RefSeq" id="XP_016878127.1">
    <molecule id="Q5ZPR3-1"/>
    <property type="nucleotide sequence ID" value="XM_017022638.2"/>
</dbReference>
<dbReference type="RefSeq" id="XP_047289103.1">
    <molecule id="Q5ZPR3-1"/>
    <property type="nucleotide sequence ID" value="XM_047433147.1"/>
</dbReference>
<dbReference type="RefSeq" id="XP_047289104.1">
    <molecule id="Q5ZPR3-1"/>
    <property type="nucleotide sequence ID" value="XM_047433148.1"/>
</dbReference>
<dbReference type="RefSeq" id="XP_054234903.1">
    <molecule id="Q5ZPR3-1"/>
    <property type="nucleotide sequence ID" value="XM_054378928.1"/>
</dbReference>
<dbReference type="RefSeq" id="XP_054234904.1">
    <molecule id="Q5ZPR3-1"/>
    <property type="nucleotide sequence ID" value="XM_054378929.1"/>
</dbReference>
<dbReference type="RefSeq" id="XP_054234905.1">
    <molecule id="Q5ZPR3-1"/>
    <property type="nucleotide sequence ID" value="XM_054378930.1"/>
</dbReference>
<dbReference type="RefSeq" id="XP_054234906.1">
    <molecule id="Q5ZPR3-1"/>
    <property type="nucleotide sequence ID" value="XM_054378931.1"/>
</dbReference>
<dbReference type="RefSeq" id="XP_054234907.1">
    <molecule id="Q5ZPR3-1"/>
    <property type="nucleotide sequence ID" value="XM_054378932.1"/>
</dbReference>
<dbReference type="SMR" id="Q5ZPR3"/>
<dbReference type="BioGRID" id="123260">
    <property type="interactions" value="29"/>
</dbReference>
<dbReference type="FunCoup" id="Q5ZPR3">
    <property type="interactions" value="694"/>
</dbReference>
<dbReference type="IntAct" id="Q5ZPR3">
    <property type="interactions" value="27"/>
</dbReference>
<dbReference type="MINT" id="Q5ZPR3"/>
<dbReference type="STRING" id="9606.ENSP00000320084"/>
<dbReference type="ChEMBL" id="CHEMBL3712879"/>
<dbReference type="DrugBank" id="DB15635">
    <property type="generic name" value="Omburtamab"/>
</dbReference>
<dbReference type="GuidetoPHARMACOLOGY" id="2938"/>
<dbReference type="GlyConnect" id="1087">
    <property type="glycosylation" value="38 N-Linked glycans (3 sites)"/>
</dbReference>
<dbReference type="GlyCosmos" id="Q5ZPR3">
    <property type="glycosylation" value="7 sites, 37 glycans"/>
</dbReference>
<dbReference type="GlyGen" id="Q5ZPR3">
    <property type="glycosylation" value="10 sites, 77 N-linked glycans (5 sites), 2 O-linked glycans (2 sites)"/>
</dbReference>
<dbReference type="iPTMnet" id="Q5ZPR3"/>
<dbReference type="PhosphoSitePlus" id="Q5ZPR3"/>
<dbReference type="SwissPalm" id="Q5ZPR3"/>
<dbReference type="BioMuta" id="CD276"/>
<dbReference type="DMDM" id="74757248"/>
<dbReference type="jPOST" id="Q5ZPR3"/>
<dbReference type="MassIVE" id="Q5ZPR3"/>
<dbReference type="PaxDb" id="9606-ENSP00000320084"/>
<dbReference type="PeptideAtlas" id="Q5ZPR3"/>
<dbReference type="ProteomicsDB" id="65865">
    <molecule id="Q5ZPR3-1"/>
</dbReference>
<dbReference type="ProteomicsDB" id="65866">
    <molecule id="Q5ZPR3-2"/>
</dbReference>
<dbReference type="ProteomicsDB" id="65867">
    <molecule id="Q5ZPR3-3"/>
</dbReference>
<dbReference type="ProteomicsDB" id="65868">
    <molecule id="Q5ZPR3-4"/>
</dbReference>
<dbReference type="Pumba" id="Q5ZPR3"/>
<dbReference type="ABCD" id="Q5ZPR3">
    <property type="antibodies" value="176 sequenced antibodies"/>
</dbReference>
<dbReference type="Antibodypedia" id="2288">
    <property type="antibodies" value="1064 antibodies from 48 providers"/>
</dbReference>
<dbReference type="CPTC" id="Q5ZPR3">
    <property type="antibodies" value="1 antibody"/>
</dbReference>
<dbReference type="DNASU" id="80381"/>
<dbReference type="Ensembl" id="ENST00000318424.9">
    <molecule id="Q5ZPR3-2"/>
    <property type="protein sequence ID" value="ENSP00000320058.5"/>
    <property type="gene ID" value="ENSG00000103855.18"/>
</dbReference>
<dbReference type="Ensembl" id="ENST00000318443.10">
    <molecule id="Q5ZPR3-1"/>
    <property type="protein sequence ID" value="ENSP00000320084.5"/>
    <property type="gene ID" value="ENSG00000103855.18"/>
</dbReference>
<dbReference type="Ensembl" id="ENST00000561213.5">
    <molecule id="Q5ZPR3-4"/>
    <property type="protein sequence ID" value="ENSP00000452736.1"/>
    <property type="gene ID" value="ENSG00000103855.18"/>
</dbReference>
<dbReference type="Ensembl" id="ENST00000564751.5">
    <molecule id="Q5ZPR3-2"/>
    <property type="protein sequence ID" value="ENSP00000454940.1"/>
    <property type="gene ID" value="ENSG00000103855.18"/>
</dbReference>
<dbReference type="GeneID" id="80381"/>
<dbReference type="KEGG" id="hsa:80381"/>
<dbReference type="MANE-Select" id="ENST00000318443.10">
    <property type="protein sequence ID" value="ENSP00000320084.5"/>
    <property type="RefSeq nucleotide sequence ID" value="NM_001024736.2"/>
    <property type="RefSeq protein sequence ID" value="NP_001019907.1"/>
</dbReference>
<dbReference type="UCSC" id="uc002avu.2">
    <molecule id="Q5ZPR3-1"/>
    <property type="organism name" value="human"/>
</dbReference>
<dbReference type="AGR" id="HGNC:19137"/>
<dbReference type="CTD" id="80381"/>
<dbReference type="DisGeNET" id="80381"/>
<dbReference type="GeneCards" id="CD276"/>
<dbReference type="HGNC" id="HGNC:19137">
    <property type="gene designation" value="CD276"/>
</dbReference>
<dbReference type="HPA" id="ENSG00000103855">
    <property type="expression patterns" value="Low tissue specificity"/>
</dbReference>
<dbReference type="MalaCards" id="CD276"/>
<dbReference type="MIM" id="605715">
    <property type="type" value="gene"/>
</dbReference>
<dbReference type="neXtProt" id="NX_Q5ZPR3"/>
<dbReference type="OpenTargets" id="ENSG00000103855"/>
<dbReference type="PharmGKB" id="PA142672148"/>
<dbReference type="VEuPathDB" id="HostDB:ENSG00000103855"/>
<dbReference type="eggNOG" id="ENOG502QU94">
    <property type="taxonomic scope" value="Eukaryota"/>
</dbReference>
<dbReference type="GeneTree" id="ENSGT00940000154641"/>
<dbReference type="HOGENOM" id="CLU_510842_0_0_1"/>
<dbReference type="InParanoid" id="Q5ZPR3"/>
<dbReference type="OMA" id="DIEWERT"/>
<dbReference type="OrthoDB" id="8897154at2759"/>
<dbReference type="PAN-GO" id="Q5ZPR3">
    <property type="GO annotations" value="4 GO annotations based on evolutionary models"/>
</dbReference>
<dbReference type="PhylomeDB" id="Q5ZPR3"/>
<dbReference type="TreeFam" id="TF331083"/>
<dbReference type="PathwayCommons" id="Q5ZPR3"/>
<dbReference type="SignaLink" id="Q5ZPR3"/>
<dbReference type="BioGRID-ORCS" id="80381">
    <property type="hits" value="20 hits in 1170 CRISPR screens"/>
</dbReference>
<dbReference type="ChiTaRS" id="CD276">
    <property type="organism name" value="human"/>
</dbReference>
<dbReference type="GeneWiki" id="CD276"/>
<dbReference type="GenomeRNAi" id="80381"/>
<dbReference type="Pharos" id="Q5ZPR3">
    <property type="development level" value="Tbio"/>
</dbReference>
<dbReference type="PRO" id="PR:Q5ZPR3"/>
<dbReference type="Proteomes" id="UP000005640">
    <property type="component" value="Chromosome 15"/>
</dbReference>
<dbReference type="RNAct" id="Q5ZPR3">
    <property type="molecule type" value="protein"/>
</dbReference>
<dbReference type="Bgee" id="ENSG00000103855">
    <property type="expression patterns" value="Expressed in stromal cell of endometrium and 167 other cell types or tissues"/>
</dbReference>
<dbReference type="ExpressionAtlas" id="Q5ZPR3">
    <property type="expression patterns" value="baseline and differential"/>
</dbReference>
<dbReference type="GO" id="GO:0009897">
    <property type="term" value="C:external side of plasma membrane"/>
    <property type="evidence" value="ECO:0000318"/>
    <property type="project" value="GO_Central"/>
</dbReference>
<dbReference type="GO" id="GO:0016020">
    <property type="term" value="C:membrane"/>
    <property type="evidence" value="ECO:0000303"/>
    <property type="project" value="HGNC-UCL"/>
</dbReference>
<dbReference type="GO" id="GO:0005102">
    <property type="term" value="F:signaling receptor binding"/>
    <property type="evidence" value="ECO:0000318"/>
    <property type="project" value="GO_Central"/>
</dbReference>
<dbReference type="GO" id="GO:0042102">
    <property type="term" value="P:positive regulation of T cell proliferation"/>
    <property type="evidence" value="ECO:0000314"/>
    <property type="project" value="HGNC-UCL"/>
</dbReference>
<dbReference type="GO" id="GO:0032729">
    <property type="term" value="P:positive regulation of type II interferon production"/>
    <property type="evidence" value="ECO:0000314"/>
    <property type="project" value="HGNC-UCL"/>
</dbReference>
<dbReference type="GO" id="GO:0001817">
    <property type="term" value="P:regulation of cytokine production"/>
    <property type="evidence" value="ECO:0000318"/>
    <property type="project" value="GO_Central"/>
</dbReference>
<dbReference type="GO" id="GO:0050776">
    <property type="term" value="P:regulation of immune response"/>
    <property type="evidence" value="ECO:0000303"/>
    <property type="project" value="HGNC-UCL"/>
</dbReference>
<dbReference type="GO" id="GO:0042110">
    <property type="term" value="P:T cell activation"/>
    <property type="evidence" value="ECO:0000314"/>
    <property type="project" value="UniProtKB"/>
</dbReference>
<dbReference type="GO" id="GO:0050852">
    <property type="term" value="P:T cell receptor signaling pathway"/>
    <property type="evidence" value="ECO:0000318"/>
    <property type="project" value="GO_Central"/>
</dbReference>
<dbReference type="CDD" id="cd00096">
    <property type="entry name" value="Ig"/>
    <property type="match status" value="1"/>
</dbReference>
<dbReference type="CDD" id="cd20934">
    <property type="entry name" value="IgV_B7-H3"/>
    <property type="match status" value="2"/>
</dbReference>
<dbReference type="FunFam" id="2.60.40.10:FF:000438">
    <property type="entry name" value="CD276 antigen"/>
    <property type="match status" value="2"/>
</dbReference>
<dbReference type="FunFam" id="2.60.40.10:FF:000499">
    <property type="entry name" value="CD276 antigen"/>
    <property type="match status" value="2"/>
</dbReference>
<dbReference type="Gene3D" id="2.60.40.10">
    <property type="entry name" value="Immunoglobulins"/>
    <property type="match status" value="4"/>
</dbReference>
<dbReference type="InterPro" id="IPR053896">
    <property type="entry name" value="BTN3A2-like_Ig-C"/>
</dbReference>
<dbReference type="InterPro" id="IPR047318">
    <property type="entry name" value="CD276_IgV"/>
</dbReference>
<dbReference type="InterPro" id="IPR007110">
    <property type="entry name" value="Ig-like_dom"/>
</dbReference>
<dbReference type="InterPro" id="IPR036179">
    <property type="entry name" value="Ig-like_dom_sf"/>
</dbReference>
<dbReference type="InterPro" id="IPR013783">
    <property type="entry name" value="Ig-like_fold"/>
</dbReference>
<dbReference type="InterPro" id="IPR003597">
    <property type="entry name" value="Ig_C1-set"/>
</dbReference>
<dbReference type="InterPro" id="IPR003599">
    <property type="entry name" value="Ig_sub"/>
</dbReference>
<dbReference type="InterPro" id="IPR003598">
    <property type="entry name" value="Ig_sub2"/>
</dbReference>
<dbReference type="InterPro" id="IPR013106">
    <property type="entry name" value="Ig_V-set"/>
</dbReference>
<dbReference type="InterPro" id="IPR050504">
    <property type="entry name" value="IgSF_BTN/MOG"/>
</dbReference>
<dbReference type="PANTHER" id="PTHR24100">
    <property type="entry name" value="BUTYROPHILIN"/>
    <property type="match status" value="1"/>
</dbReference>
<dbReference type="PANTHER" id="PTHR24100:SF155">
    <property type="entry name" value="CD276 ANTIGEN"/>
    <property type="match status" value="1"/>
</dbReference>
<dbReference type="Pfam" id="PF22705">
    <property type="entry name" value="C2-set_3"/>
    <property type="match status" value="2"/>
</dbReference>
<dbReference type="Pfam" id="PF07686">
    <property type="entry name" value="V-set"/>
    <property type="match status" value="2"/>
</dbReference>
<dbReference type="SMART" id="SM00409">
    <property type="entry name" value="IG"/>
    <property type="match status" value="4"/>
</dbReference>
<dbReference type="SMART" id="SM00407">
    <property type="entry name" value="IGc1"/>
    <property type="match status" value="2"/>
</dbReference>
<dbReference type="SMART" id="SM00408">
    <property type="entry name" value="IGc2"/>
    <property type="match status" value="4"/>
</dbReference>
<dbReference type="SMART" id="SM00406">
    <property type="entry name" value="IGv"/>
    <property type="match status" value="2"/>
</dbReference>
<dbReference type="SUPFAM" id="SSF48726">
    <property type="entry name" value="Immunoglobulin"/>
    <property type="match status" value="4"/>
</dbReference>
<dbReference type="PROSITE" id="PS50835">
    <property type="entry name" value="IG_LIKE"/>
    <property type="match status" value="4"/>
</dbReference>
<keyword id="KW-0025">Alternative splicing</keyword>
<keyword id="KW-0903">Direct protein sequencing</keyword>
<keyword id="KW-1015">Disulfide bond</keyword>
<keyword id="KW-0325">Glycoprotein</keyword>
<keyword id="KW-0393">Immunoglobulin domain</keyword>
<keyword id="KW-0472">Membrane</keyword>
<keyword id="KW-0597">Phosphoprotein</keyword>
<keyword id="KW-1267">Proteomics identification</keyword>
<keyword id="KW-1185">Reference proteome</keyword>
<keyword id="KW-0677">Repeat</keyword>
<keyword id="KW-0732">Signal</keyword>
<keyword id="KW-0812">Transmembrane</keyword>
<keyword id="KW-1133">Transmembrane helix</keyword>
<reference key="1">
    <citation type="journal article" date="2001" name="Nat. Immunol.">
        <title>B7-H3: a costimulatory molecule for T cell activation and IFN-gamma production.</title>
        <authorList>
            <person name="Chapoval A.I."/>
            <person name="Ni J."/>
            <person name="Lau J.S."/>
            <person name="Wilcox R.A."/>
            <person name="Flies D.B."/>
            <person name="Liu D."/>
            <person name="Dong H."/>
            <person name="Sica G.L."/>
            <person name="Zhu G."/>
            <person name="Tamada K."/>
            <person name="Chen L."/>
        </authorList>
    </citation>
    <scope>NUCLEOTIDE SEQUENCE [MRNA] (ISOFORM 2)</scope>
    <scope>TISSUE SPECIFICITY</scope>
    <scope>FUNCTION</scope>
</reference>
<reference key="2">
    <citation type="journal article" date="2004" name="J. Immunol.">
        <title>Molecular characterization of human 4Ig-B7-H3, a member of the B7 family with four Ig-like domains.</title>
        <authorList>
            <person name="Steinberger P."/>
            <person name="Majdic O."/>
            <person name="Derdak S.V."/>
            <person name="Pfistershammer K."/>
            <person name="Kirchberger S."/>
            <person name="Klauser C."/>
            <person name="Zlabinger G."/>
            <person name="Pickl W.F."/>
            <person name="Stockl J."/>
            <person name="Knapp W."/>
        </authorList>
    </citation>
    <scope>NUCLEOTIDE SEQUENCE [MRNA] (ISOFORM 1)</scope>
    <scope>TISSUE SPECIFICITY</scope>
    <scope>FUNCTION</scope>
    <scope>INDUCTION</scope>
</reference>
<reference key="3">
    <citation type="journal article" date="2003" name="Genome Res.">
        <title>The secreted protein discovery initiative (SPDI), a large-scale effort to identify novel human secreted and transmembrane proteins: a bioinformatics assessment.</title>
        <authorList>
            <person name="Clark H.F."/>
            <person name="Gurney A.L."/>
            <person name="Abaya E."/>
            <person name="Baker K."/>
            <person name="Baldwin D.T."/>
            <person name="Brush J."/>
            <person name="Chen J."/>
            <person name="Chow B."/>
            <person name="Chui C."/>
            <person name="Crowley C."/>
            <person name="Currell B."/>
            <person name="Deuel B."/>
            <person name="Dowd P."/>
            <person name="Eaton D."/>
            <person name="Foster J.S."/>
            <person name="Grimaldi C."/>
            <person name="Gu Q."/>
            <person name="Hass P.E."/>
            <person name="Heldens S."/>
            <person name="Huang A."/>
            <person name="Kim H.S."/>
            <person name="Klimowski L."/>
            <person name="Jin Y."/>
            <person name="Johnson S."/>
            <person name="Lee J."/>
            <person name="Lewis L."/>
            <person name="Liao D."/>
            <person name="Mark M.R."/>
            <person name="Robbie E."/>
            <person name="Sanchez C."/>
            <person name="Schoenfeld J."/>
            <person name="Seshagiri S."/>
            <person name="Simmons L."/>
            <person name="Singh J."/>
            <person name="Smith V."/>
            <person name="Stinson J."/>
            <person name="Vagts A."/>
            <person name="Vandlen R.L."/>
            <person name="Watanabe C."/>
            <person name="Wieand D."/>
            <person name="Woods K."/>
            <person name="Xie M.-H."/>
            <person name="Yansura D.G."/>
            <person name="Yi S."/>
            <person name="Yu G."/>
            <person name="Yuan J."/>
            <person name="Zhang M."/>
            <person name="Zhang Z."/>
            <person name="Goddard A.D."/>
            <person name="Wood W.I."/>
            <person name="Godowski P.J."/>
            <person name="Gray A.M."/>
        </authorList>
    </citation>
    <scope>NUCLEOTIDE SEQUENCE [LARGE SCALE MRNA] (ISOFORM 2)</scope>
</reference>
<reference key="4">
    <citation type="journal article" date="2004" name="Nat. Genet.">
        <title>Complete sequencing and characterization of 21,243 full-length human cDNAs.</title>
        <authorList>
            <person name="Ota T."/>
            <person name="Suzuki Y."/>
            <person name="Nishikawa T."/>
            <person name="Otsuki T."/>
            <person name="Sugiyama T."/>
            <person name="Irie R."/>
            <person name="Wakamatsu A."/>
            <person name="Hayashi K."/>
            <person name="Sato H."/>
            <person name="Nagai K."/>
            <person name="Kimura K."/>
            <person name="Makita H."/>
            <person name="Sekine M."/>
            <person name="Obayashi M."/>
            <person name="Nishi T."/>
            <person name="Shibahara T."/>
            <person name="Tanaka T."/>
            <person name="Ishii S."/>
            <person name="Yamamoto J."/>
            <person name="Saito K."/>
            <person name="Kawai Y."/>
            <person name="Isono Y."/>
            <person name="Nakamura Y."/>
            <person name="Nagahari K."/>
            <person name="Murakami K."/>
            <person name="Yasuda T."/>
            <person name="Iwayanagi T."/>
            <person name="Wagatsuma M."/>
            <person name="Shiratori A."/>
            <person name="Sudo H."/>
            <person name="Hosoiri T."/>
            <person name="Kaku Y."/>
            <person name="Kodaira H."/>
            <person name="Kondo H."/>
            <person name="Sugawara M."/>
            <person name="Takahashi M."/>
            <person name="Kanda K."/>
            <person name="Yokoi T."/>
            <person name="Furuya T."/>
            <person name="Kikkawa E."/>
            <person name="Omura Y."/>
            <person name="Abe K."/>
            <person name="Kamihara K."/>
            <person name="Katsuta N."/>
            <person name="Sato K."/>
            <person name="Tanikawa M."/>
            <person name="Yamazaki M."/>
            <person name="Ninomiya K."/>
            <person name="Ishibashi T."/>
            <person name="Yamashita H."/>
            <person name="Murakawa K."/>
            <person name="Fujimori K."/>
            <person name="Tanai H."/>
            <person name="Kimata M."/>
            <person name="Watanabe M."/>
            <person name="Hiraoka S."/>
            <person name="Chiba Y."/>
            <person name="Ishida S."/>
            <person name="Ono Y."/>
            <person name="Takiguchi S."/>
            <person name="Watanabe S."/>
            <person name="Yosida M."/>
            <person name="Hotuta T."/>
            <person name="Kusano J."/>
            <person name="Kanehori K."/>
            <person name="Takahashi-Fujii A."/>
            <person name="Hara H."/>
            <person name="Tanase T.-O."/>
            <person name="Nomura Y."/>
            <person name="Togiya S."/>
            <person name="Komai F."/>
            <person name="Hara R."/>
            <person name="Takeuchi K."/>
            <person name="Arita M."/>
            <person name="Imose N."/>
            <person name="Musashino K."/>
            <person name="Yuuki H."/>
            <person name="Oshima A."/>
            <person name="Sasaki N."/>
            <person name="Aotsuka S."/>
            <person name="Yoshikawa Y."/>
            <person name="Matsunawa H."/>
            <person name="Ichihara T."/>
            <person name="Shiohata N."/>
            <person name="Sano S."/>
            <person name="Moriya S."/>
            <person name="Momiyama H."/>
            <person name="Satoh N."/>
            <person name="Takami S."/>
            <person name="Terashima Y."/>
            <person name="Suzuki O."/>
            <person name="Nakagawa S."/>
            <person name="Senoh A."/>
            <person name="Mizoguchi H."/>
            <person name="Goto Y."/>
            <person name="Shimizu F."/>
            <person name="Wakebe H."/>
            <person name="Hishigaki H."/>
            <person name="Watanabe T."/>
            <person name="Sugiyama A."/>
            <person name="Takemoto M."/>
            <person name="Kawakami B."/>
            <person name="Yamazaki M."/>
            <person name="Watanabe K."/>
            <person name="Kumagai A."/>
            <person name="Itakura S."/>
            <person name="Fukuzumi Y."/>
            <person name="Fujimori Y."/>
            <person name="Komiyama M."/>
            <person name="Tashiro H."/>
            <person name="Tanigami A."/>
            <person name="Fujiwara T."/>
            <person name="Ono T."/>
            <person name="Yamada K."/>
            <person name="Fujii Y."/>
            <person name="Ozaki K."/>
            <person name="Hirao M."/>
            <person name="Ohmori Y."/>
            <person name="Kawabata A."/>
            <person name="Hikiji T."/>
            <person name="Kobatake N."/>
            <person name="Inagaki H."/>
            <person name="Ikema Y."/>
            <person name="Okamoto S."/>
            <person name="Okitani R."/>
            <person name="Kawakami T."/>
            <person name="Noguchi S."/>
            <person name="Itoh T."/>
            <person name="Shigeta K."/>
            <person name="Senba T."/>
            <person name="Matsumura K."/>
            <person name="Nakajima Y."/>
            <person name="Mizuno T."/>
            <person name="Morinaga M."/>
            <person name="Sasaki M."/>
            <person name="Togashi T."/>
            <person name="Oyama M."/>
            <person name="Hata H."/>
            <person name="Watanabe M."/>
            <person name="Komatsu T."/>
            <person name="Mizushima-Sugano J."/>
            <person name="Satoh T."/>
            <person name="Shirai Y."/>
            <person name="Takahashi Y."/>
            <person name="Nakagawa K."/>
            <person name="Okumura K."/>
            <person name="Nagase T."/>
            <person name="Nomura N."/>
            <person name="Kikuchi H."/>
            <person name="Masuho Y."/>
            <person name="Yamashita R."/>
            <person name="Nakai K."/>
            <person name="Yada T."/>
            <person name="Nakamura Y."/>
            <person name="Ohara O."/>
            <person name="Isogai T."/>
            <person name="Sugano S."/>
        </authorList>
    </citation>
    <scope>NUCLEOTIDE SEQUENCE [LARGE SCALE MRNA] (ISOFORM 4)</scope>
    <scope>NUCLEOTIDE SEQUENCE [LARGE SCALE MRNA] OF 91-534 (ISOFORM 1)</scope>
    <scope>VARIANT MET-160</scope>
</reference>
<reference key="5">
    <citation type="journal article" date="2005" name="DNA Res.">
        <title>Signal sequence and keyword trap in silico for selection of full-length human cDNAs encoding secretion or membrane proteins from oligo-capped cDNA libraries.</title>
        <authorList>
            <person name="Otsuki T."/>
            <person name="Ota T."/>
            <person name="Nishikawa T."/>
            <person name="Hayashi K."/>
            <person name="Suzuki Y."/>
            <person name="Yamamoto J."/>
            <person name="Wakamatsu A."/>
            <person name="Kimura K."/>
            <person name="Sakamoto K."/>
            <person name="Hatano N."/>
            <person name="Kawai Y."/>
            <person name="Ishii S."/>
            <person name="Saito K."/>
            <person name="Kojima S."/>
            <person name="Sugiyama T."/>
            <person name="Ono T."/>
            <person name="Okano K."/>
            <person name="Yoshikawa Y."/>
            <person name="Aotsuka S."/>
            <person name="Sasaki N."/>
            <person name="Hattori A."/>
            <person name="Okumura K."/>
            <person name="Nagai K."/>
            <person name="Sugano S."/>
            <person name="Isogai T."/>
        </authorList>
    </citation>
    <scope>NUCLEOTIDE SEQUENCE [LARGE SCALE MRNA] (ISOFORM 1)</scope>
    <scope>VARIANT MET-160</scope>
</reference>
<reference key="6">
    <citation type="journal article" date="2004" name="Genome Res.">
        <title>The status, quality, and expansion of the NIH full-length cDNA project: the Mammalian Gene Collection (MGC).</title>
        <authorList>
            <consortium name="The MGC Project Team"/>
        </authorList>
    </citation>
    <scope>NUCLEOTIDE SEQUENCE [LARGE SCALE MRNA] (ISOFORM 3)</scope>
    <source>
        <tissue>Lung</tissue>
    </source>
</reference>
<reference key="7">
    <citation type="journal article" date="2004" name="Protein Sci.">
        <title>Signal peptide prediction based on analysis of experimentally verified cleavage sites.</title>
        <authorList>
            <person name="Zhang Z."/>
            <person name="Henzel W.J."/>
        </authorList>
    </citation>
    <scope>PROTEIN SEQUENCE OF 29-43</scope>
</reference>
<reference key="8">
    <citation type="journal article" date="2003" name="Genomics">
        <title>Duplication of primate and rodent B7-H3 immunoglobulin V- and C-like domains: divergent history of functional redundancy and exon loss.</title>
        <authorList>
            <person name="Ling V."/>
            <person name="Wu P.W."/>
            <person name="Spaulding V."/>
            <person name="Kieleczawa J."/>
            <person name="Luxenberg D."/>
            <person name="Carreno B.M."/>
            <person name="Collins M."/>
        </authorList>
    </citation>
    <scope>FUNCTION</scope>
    <scope>GENOMIC DOMAIN DUPLICATION</scope>
</reference>
<reference key="9">
    <citation type="journal article" date="2004" name="Proc. Natl. Acad. Sci. U.S.A.">
        <title>Identification of 4Ig-B7-H3 as a neuroblastoma-associated molecule that exerts a protective role from an NK cell-mediated lysis.</title>
        <authorList>
            <person name="Castriconi R."/>
            <person name="Dondero A."/>
            <person name="Augugliaro R."/>
            <person name="Cantoni C."/>
            <person name="Carnemolla B."/>
            <person name="Sementa A.R."/>
            <person name="Negri F."/>
            <person name="Conte R."/>
            <person name="Corrias M.V."/>
            <person name="Moretta L."/>
            <person name="Moretta A."/>
            <person name="Bottino C."/>
        </authorList>
    </citation>
    <scope>FUNCTION</scope>
</reference>
<reference key="10">
    <citation type="journal article" date="2005" name="Am. J. Pathol.">
        <title>The immunomodulatory proteins B7-DC, B7-H2, and B7-H3 are differentially expressed across gestation in the human placenta.</title>
        <authorList>
            <person name="Petroff M.G."/>
            <person name="Kharatyan E."/>
            <person name="Torry D.S."/>
            <person name="Holets L."/>
        </authorList>
    </citation>
    <scope>TISSUE SPECIFICITY</scope>
</reference>
<reference key="11">
    <citation type="journal article" date="2005" name="Am. J. Respir. Cell Mol. Biol.">
        <title>Constitutive and inducible expression of B7 family of ligands by human airway epithelial cells.</title>
        <authorList>
            <person name="Kim J."/>
            <person name="Myers A.C."/>
            <person name="Chen L."/>
            <person name="Pardoll D.M."/>
            <person name="Truong-Tran Q.A."/>
            <person name="Lane A.P."/>
            <person name="McDyer J.F."/>
            <person name="Fortuno L."/>
            <person name="Schleimer R.P."/>
        </authorList>
    </citation>
    <scope>FUNCTION</scope>
    <scope>TISSUE SPECIFICITY</scope>
</reference>
<reference key="12">
    <citation type="journal article" date="2005" name="Cell. Mol. Immunol.">
        <title>B7-H3: another molecule marker for Mo-DCs?</title>
        <authorList>
            <person name="Zhang G.B."/>
            <person name="Dong Q.M."/>
            <person name="Xu Y."/>
            <person name="Yu G.H."/>
            <person name="Zhang X.G."/>
        </authorList>
    </citation>
    <scope>TISSUE SPECIFICITY</scope>
</reference>
<reference key="13">
    <citation type="journal article" date="2005" name="Eur. J. Immunol.">
        <title>B7-H3 promotes acute and chronic allograft rejection.</title>
        <authorList>
            <person name="Wang L."/>
            <person name="Fraser C.C."/>
            <person name="Kikly K."/>
            <person name="Wells A.D."/>
            <person name="Han R."/>
            <person name="Coyle A.J."/>
            <person name="Chen L."/>
            <person name="Hancock W.W."/>
        </authorList>
    </citation>
    <scope>FUNCTION</scope>
    <scope>INDUCTION</scope>
</reference>
<reference key="14">
    <citation type="journal article" date="2008" name="Proc. Natl. Acad. Sci. U.S.A.">
        <title>Triggering receptor expressed on myeloid cell-like transcript 2 (TLT-2) is a counter-receptor for B7-H3 and enhances T cell responses.</title>
        <authorList>
            <person name="Hashiguchi M."/>
            <person name="Kobori H."/>
            <person name="Ritprajak P."/>
            <person name="Kamimura Y."/>
            <person name="Kozono H."/>
            <person name="Azuma M."/>
        </authorList>
    </citation>
    <scope>INTERACTION WITH TREML2</scope>
</reference>
<reference key="15">
    <citation type="journal article" date="2008" name="Proc. Natl. Acad. Sci. U.S.A.">
        <authorList>
            <person name="Hashiguchi M."/>
            <person name="Kobori H."/>
            <person name="Ritprajak P."/>
            <person name="Kamimura Y."/>
            <person name="Kozono H."/>
            <person name="Azuma M."/>
        </authorList>
    </citation>
    <scope>ERRATUM OF PUBMED:18650384</scope>
</reference>
<reference key="16">
    <citation type="journal article" date="2008" name="Proc. Natl. Acad. Sci. U.S.A.">
        <title>A quantitative atlas of mitotic phosphorylation.</title>
        <authorList>
            <person name="Dephoure N."/>
            <person name="Zhou C."/>
            <person name="Villen J."/>
            <person name="Beausoleil S.A."/>
            <person name="Bakalarski C.E."/>
            <person name="Elledge S.J."/>
            <person name="Gygi S.P."/>
        </authorList>
    </citation>
    <scope>PHOSPHORYLATION [LARGE SCALE ANALYSIS] AT SER-525</scope>
    <scope>IDENTIFICATION BY MASS SPECTROMETRY [LARGE SCALE ANALYSIS]</scope>
    <source>
        <tissue>Cervix carcinoma</tissue>
    </source>
</reference>
<reference key="17">
    <citation type="journal article" date="2009" name="J. Proteome Res.">
        <title>Glycoproteomics analysis of human liver tissue by combination of multiple enzyme digestion and hydrazide chemistry.</title>
        <authorList>
            <person name="Chen R."/>
            <person name="Jiang X."/>
            <person name="Sun D."/>
            <person name="Han G."/>
            <person name="Wang F."/>
            <person name="Ye M."/>
            <person name="Wang L."/>
            <person name="Zou H."/>
        </authorList>
    </citation>
    <scope>GLYCOSYLATION [LARGE SCALE ANALYSIS] AT ASN-322 AND ASN-407</scope>
    <source>
        <tissue>Liver</tissue>
    </source>
</reference>
<reference key="18">
    <citation type="journal article" date="2011" name="BMC Syst. Biol.">
        <title>Initial characterization of the human central proteome.</title>
        <authorList>
            <person name="Burkard T.R."/>
            <person name="Planyavsky M."/>
            <person name="Kaupe I."/>
            <person name="Breitwieser F.P."/>
            <person name="Buerckstuemmer T."/>
            <person name="Bennett K.L."/>
            <person name="Superti-Furga G."/>
            <person name="Colinge J."/>
        </authorList>
    </citation>
    <scope>IDENTIFICATION BY MASS SPECTROMETRY [LARGE SCALE ANALYSIS]</scope>
</reference>
<reference key="19">
    <citation type="journal article" date="2014" name="J. Proteomics">
        <title>An enzyme assisted RP-RPLC approach for in-depth analysis of human liver phosphoproteome.</title>
        <authorList>
            <person name="Bian Y."/>
            <person name="Song C."/>
            <person name="Cheng K."/>
            <person name="Dong M."/>
            <person name="Wang F."/>
            <person name="Huang J."/>
            <person name="Sun D."/>
            <person name="Wang L."/>
            <person name="Ye M."/>
            <person name="Zou H."/>
        </authorList>
    </citation>
    <scope>PHOSPHORYLATION [LARGE SCALE ANALYSIS] AT SER-525</scope>
    <scope>IDENTIFICATION BY MASS SPECTROMETRY [LARGE SCALE ANALYSIS]</scope>
    <source>
        <tissue>Liver</tissue>
    </source>
</reference>
<evidence type="ECO:0000255" key="1"/>
<evidence type="ECO:0000255" key="2">
    <source>
        <dbReference type="PROSITE-ProRule" id="PRU00114"/>
    </source>
</evidence>
<evidence type="ECO:0000256" key="3">
    <source>
        <dbReference type="SAM" id="MobiDB-lite"/>
    </source>
</evidence>
<evidence type="ECO:0000269" key="4">
    <source>
    </source>
</evidence>
<evidence type="ECO:0000269" key="5">
    <source>
    </source>
</evidence>
<evidence type="ECO:0000269" key="6">
    <source>
    </source>
</evidence>
<evidence type="ECO:0000269" key="7">
    <source>
    </source>
</evidence>
<evidence type="ECO:0000269" key="8">
    <source>
    </source>
</evidence>
<evidence type="ECO:0000269" key="9">
    <source>
    </source>
</evidence>
<evidence type="ECO:0000269" key="10">
    <source>
    </source>
</evidence>
<evidence type="ECO:0000269" key="11">
    <source>
    </source>
</evidence>
<evidence type="ECO:0000269" key="12">
    <source>
    </source>
</evidence>
<evidence type="ECO:0000269" key="13">
    <source>
    </source>
</evidence>
<evidence type="ECO:0000269" key="14">
    <source>
    </source>
</evidence>
<evidence type="ECO:0000269" key="15">
    <source>
    </source>
</evidence>
<evidence type="ECO:0000269" key="16">
    <source>
    </source>
</evidence>
<evidence type="ECO:0000303" key="17">
    <source>
    </source>
</evidence>
<evidence type="ECO:0000303" key="18">
    <source>
    </source>
</evidence>
<evidence type="ECO:0000303" key="19">
    <source>
    </source>
</evidence>
<evidence type="ECO:0000303" key="20">
    <source>
    </source>
</evidence>
<evidence type="ECO:0000305" key="21"/>
<evidence type="ECO:0007744" key="22">
    <source>
    </source>
</evidence>
<evidence type="ECO:0007744" key="23">
    <source>
    </source>
</evidence>
<feature type="signal peptide" evidence="9">
    <location>
        <begin position="1"/>
        <end position="28"/>
    </location>
</feature>
<feature type="chain" id="PRO_0000045801" description="CD276 antigen">
    <location>
        <begin position="29"/>
        <end position="534"/>
    </location>
</feature>
<feature type="topological domain" description="Extracellular" evidence="1">
    <location>
        <begin position="29"/>
        <end position="466"/>
    </location>
</feature>
<feature type="transmembrane region" description="Helical" evidence="1">
    <location>
        <begin position="467"/>
        <end position="487"/>
    </location>
</feature>
<feature type="topological domain" description="Cytoplasmic" evidence="1">
    <location>
        <begin position="488"/>
        <end position="534"/>
    </location>
</feature>
<feature type="domain" description="Ig-like V-type 1">
    <location>
        <begin position="29"/>
        <end position="139"/>
    </location>
</feature>
<feature type="domain" description="Ig-like C2-type 1">
    <location>
        <begin position="145"/>
        <end position="238"/>
    </location>
</feature>
<feature type="domain" description="Ig-like V-type 2">
    <location>
        <begin position="243"/>
        <end position="357"/>
    </location>
</feature>
<feature type="domain" description="Ig-like C2-type 2">
    <location>
        <begin position="363"/>
        <end position="456"/>
    </location>
</feature>
<feature type="region of interest" description="Disordered" evidence="3">
    <location>
        <begin position="498"/>
        <end position="534"/>
    </location>
</feature>
<feature type="compositionally biased region" description="Acidic residues" evidence="3">
    <location>
        <begin position="498"/>
        <end position="510"/>
    </location>
</feature>
<feature type="modified residue" description="Phosphoserine" evidence="22 23">
    <location>
        <position position="525"/>
    </location>
</feature>
<feature type="glycosylation site" description="N-linked (GlcNAc...) asparagine" evidence="1">
    <location>
        <position position="104"/>
    </location>
</feature>
<feature type="glycosylation site" description="N-linked (GlcNAc...) asparagine" evidence="1">
    <location>
        <position position="189"/>
    </location>
</feature>
<feature type="glycosylation site" description="N-linked (GlcNAc...) asparagine" evidence="1">
    <location>
        <position position="215"/>
    </location>
</feature>
<feature type="glycosylation site" description="N-linked (GlcNAc...) asparagine" evidence="16">
    <location>
        <position position="322"/>
    </location>
</feature>
<feature type="glycosylation site" description="N-linked (GlcNAc...) asparagine" evidence="16">
    <location>
        <position position="407"/>
    </location>
</feature>
<feature type="glycosylation site" description="N-linked (GlcNAc...) asparagine" evidence="1">
    <location>
        <position position="433"/>
    </location>
</feature>
<feature type="disulfide bond" evidence="2">
    <location>
        <begin position="50"/>
        <end position="122"/>
    </location>
</feature>
<feature type="disulfide bond" evidence="2">
    <location>
        <begin position="165"/>
        <end position="220"/>
    </location>
</feature>
<feature type="disulfide bond" evidence="2">
    <location>
        <begin position="268"/>
        <end position="340"/>
    </location>
</feature>
<feature type="disulfide bond" evidence="2">
    <location>
        <begin position="383"/>
        <end position="438"/>
    </location>
</feature>
<feature type="splice variant" id="VSP_017088" description="In isoform 2." evidence="17 18">
    <location>
        <begin position="159"/>
        <end position="376"/>
    </location>
</feature>
<feature type="splice variant" id="VSP_017089" description="In isoform 3." evidence="20">
    <original>EALWVTVGLSVCLIALLVALAFVCWRKIK</original>
    <variation>GPASSAVPLSPAHPPHGSMCWSHWFSRGL</variation>
    <location>
        <begin position="465"/>
        <end position="493"/>
    </location>
</feature>
<feature type="splice variant" id="VSP_017090" description="In isoform 3." evidence="20">
    <location>
        <begin position="494"/>
        <end position="534"/>
    </location>
</feature>
<feature type="splice variant" id="VSP_017091" description="In isoform 4." evidence="19">
    <original>DDGQEIA</original>
    <variation>GKDTWA</variation>
    <location>
        <begin position="528"/>
        <end position="534"/>
    </location>
</feature>
<feature type="sequence variant" id="VAR_049857" description="In dbSNP:rs7173448.">
    <original>P</original>
    <variation>L</variation>
    <location>
        <position position="97"/>
    </location>
</feature>
<feature type="sequence variant" id="VAR_049858" description="In dbSNP:rs7173476.">
    <original>R</original>
    <variation>S</variation>
    <location>
        <position position="111"/>
    </location>
</feature>
<feature type="sequence variant" id="VAR_049859" description="In dbSNP:rs11574477.">
    <original>Q</original>
    <variation>L</variation>
    <location>
        <position position="137"/>
    </location>
</feature>
<feature type="sequence variant" id="VAR_049860" description="In dbSNP:rs11574479." evidence="6 14">
    <original>T</original>
    <variation>M</variation>
    <location>
        <position position="160"/>
    </location>
</feature>
<feature type="sequence variant" id="VAR_049861" description="In dbSNP:rs11574483.">
    <original>R</original>
    <variation>H</variation>
    <location>
        <position position="267"/>
    </location>
</feature>
<feature type="sequence variant" id="VAR_049862" description="In dbSNP:rs10083681.">
    <original>A</original>
    <variation>T</variation>
    <location>
        <position position="279"/>
    </location>
</feature>
<feature type="sequence variant" id="VAR_049863" description="In dbSNP:rs148625372.">
    <original>P</original>
    <variation>L</variation>
    <location>
        <position position="315"/>
    </location>
</feature>
<feature type="sequence variant" id="VAR_049864" description="In dbSNP:rs1446179438.">
    <original>R</original>
    <variation>S</variation>
    <location>
        <position position="329"/>
    </location>
</feature>
<feature type="sequence variant" id="VAR_049865" description="In dbSNP:rs145827704.">
    <original>T</original>
    <variation>M</variation>
    <location>
        <position position="378"/>
    </location>
</feature>
<feature type="sequence conflict" description="In Ref. 3; AAQ88709." evidence="21" ref="3">
    <original>R</original>
    <variation>Q</variation>
    <location>
        <position position="387"/>
    </location>
</feature>
<feature type="sequence conflict" description="In Ref. 4; BAC11243." evidence="21" ref="4">
    <original>L</original>
    <variation>P</variation>
    <location>
        <position position="473"/>
    </location>
</feature>
<name>CD276_HUMAN</name>